<name>QUEF_BRUME</name>
<evidence type="ECO:0000255" key="1">
    <source>
        <dbReference type="HAMAP-Rule" id="MF_00818"/>
    </source>
</evidence>
<sequence length="155" mass="17402">MSENTIYSGLKQLGSHTDIPLTPEEAVLERVANPQEGTPYCVRFTAPEFSSLCPMTGQPDFAHLVIDYVPGKWLVESKSLKLFLFSFRNHGAFHEDCTVTIGKRLVDLLEPEWLRIGGYWYPRGGIPIDVFYQTGAAPLNVWIPEQGVANYRGRG</sequence>
<proteinExistence type="inferred from homology"/>
<comment type="function">
    <text evidence="1">Catalyzes the NADPH-dependent reduction of 7-cyano-7-deazaguanine (preQ0) to 7-aminomethyl-7-deazaguanine (preQ1).</text>
</comment>
<comment type="catalytic activity">
    <reaction evidence="1">
        <text>7-aminomethyl-7-carbaguanine + 2 NADP(+) = 7-cyano-7-deazaguanine + 2 NADPH + 3 H(+)</text>
        <dbReference type="Rhea" id="RHEA:13409"/>
        <dbReference type="ChEBI" id="CHEBI:15378"/>
        <dbReference type="ChEBI" id="CHEBI:45075"/>
        <dbReference type="ChEBI" id="CHEBI:57783"/>
        <dbReference type="ChEBI" id="CHEBI:58349"/>
        <dbReference type="ChEBI" id="CHEBI:58703"/>
        <dbReference type="EC" id="1.7.1.13"/>
    </reaction>
</comment>
<comment type="pathway">
    <text evidence="1">tRNA modification; tRNA-queuosine biosynthesis.</text>
</comment>
<comment type="subcellular location">
    <subcellularLocation>
        <location evidence="1">Cytoplasm</location>
    </subcellularLocation>
</comment>
<comment type="similarity">
    <text evidence="1">Belongs to the GTP cyclohydrolase I family. QueF type 1 subfamily.</text>
</comment>
<gene>
    <name evidence="1" type="primary">queF</name>
    <name type="ordered locus">BMEI0804</name>
</gene>
<accession>Q8YHJ4</accession>
<feature type="chain" id="PRO_0000162965" description="NADPH-dependent 7-cyano-7-deazaguanine reductase">
    <location>
        <begin position="1"/>
        <end position="155"/>
    </location>
</feature>
<feature type="active site" description="Thioimide intermediate" evidence="1">
    <location>
        <position position="53"/>
    </location>
</feature>
<feature type="active site" description="Proton donor" evidence="1">
    <location>
        <position position="60"/>
    </location>
</feature>
<feature type="binding site" evidence="1">
    <location>
        <begin position="75"/>
        <end position="77"/>
    </location>
    <ligand>
        <name>substrate</name>
    </ligand>
</feature>
<feature type="binding site" evidence="1">
    <location>
        <begin position="94"/>
        <end position="95"/>
    </location>
    <ligand>
        <name>substrate</name>
    </ligand>
</feature>
<dbReference type="EC" id="1.7.1.13" evidence="1"/>
<dbReference type="EMBL" id="AE008917">
    <property type="protein sequence ID" value="AAL51985.1"/>
    <property type="molecule type" value="Genomic_DNA"/>
</dbReference>
<dbReference type="PIR" id="AF3352">
    <property type="entry name" value="AF3352"/>
</dbReference>
<dbReference type="RefSeq" id="WP_002964310.1">
    <property type="nucleotide sequence ID" value="NZ_GG703780.1"/>
</dbReference>
<dbReference type="SMR" id="Q8YHJ4"/>
<dbReference type="DNASU" id="3787830"/>
<dbReference type="GeneID" id="93016485"/>
<dbReference type="KEGG" id="bme:BMEI0804"/>
<dbReference type="KEGG" id="bmel:DK63_618"/>
<dbReference type="PATRIC" id="fig|224914.52.peg.645"/>
<dbReference type="eggNOG" id="COG0780">
    <property type="taxonomic scope" value="Bacteria"/>
</dbReference>
<dbReference type="PhylomeDB" id="Q8YHJ4"/>
<dbReference type="UniPathway" id="UPA00392"/>
<dbReference type="Proteomes" id="UP000000419">
    <property type="component" value="Chromosome I"/>
</dbReference>
<dbReference type="GO" id="GO:0005737">
    <property type="term" value="C:cytoplasm"/>
    <property type="evidence" value="ECO:0007669"/>
    <property type="project" value="UniProtKB-SubCell"/>
</dbReference>
<dbReference type="GO" id="GO:0033739">
    <property type="term" value="F:preQ1 synthase activity"/>
    <property type="evidence" value="ECO:0007669"/>
    <property type="project" value="UniProtKB-UniRule"/>
</dbReference>
<dbReference type="GO" id="GO:0008616">
    <property type="term" value="P:queuosine biosynthetic process"/>
    <property type="evidence" value="ECO:0007669"/>
    <property type="project" value="UniProtKB-UniRule"/>
</dbReference>
<dbReference type="GO" id="GO:0006400">
    <property type="term" value="P:tRNA modification"/>
    <property type="evidence" value="ECO:0007669"/>
    <property type="project" value="UniProtKB-UniRule"/>
</dbReference>
<dbReference type="Gene3D" id="3.30.1130.10">
    <property type="match status" value="1"/>
</dbReference>
<dbReference type="HAMAP" id="MF_00818">
    <property type="entry name" value="QueF_type1"/>
    <property type="match status" value="1"/>
</dbReference>
<dbReference type="InterPro" id="IPR043133">
    <property type="entry name" value="GTP-CH-I_C/QueF"/>
</dbReference>
<dbReference type="InterPro" id="IPR050084">
    <property type="entry name" value="NADPH_dep_7-cyano-7-deazaG_red"/>
</dbReference>
<dbReference type="InterPro" id="IPR029500">
    <property type="entry name" value="QueF"/>
</dbReference>
<dbReference type="InterPro" id="IPR016856">
    <property type="entry name" value="QueF_type1"/>
</dbReference>
<dbReference type="NCBIfam" id="TIGR03139">
    <property type="entry name" value="QueF-II"/>
    <property type="match status" value="1"/>
</dbReference>
<dbReference type="PANTHER" id="PTHR34354">
    <property type="entry name" value="NADPH-DEPENDENT 7-CYANO-7-DEAZAGUANINE REDUCTASE"/>
    <property type="match status" value="1"/>
</dbReference>
<dbReference type="PANTHER" id="PTHR34354:SF1">
    <property type="entry name" value="NADPH-DEPENDENT 7-CYANO-7-DEAZAGUANINE REDUCTASE"/>
    <property type="match status" value="1"/>
</dbReference>
<dbReference type="Pfam" id="PF14489">
    <property type="entry name" value="QueF"/>
    <property type="match status" value="1"/>
</dbReference>
<dbReference type="SUPFAM" id="SSF55620">
    <property type="entry name" value="Tetrahydrobiopterin biosynthesis enzymes-like"/>
    <property type="match status" value="1"/>
</dbReference>
<protein>
    <recommendedName>
        <fullName evidence="1">NADPH-dependent 7-cyano-7-deazaguanine reductase</fullName>
        <ecNumber evidence="1">1.7.1.13</ecNumber>
    </recommendedName>
    <alternativeName>
        <fullName evidence="1">7-cyano-7-carbaguanine reductase</fullName>
    </alternativeName>
    <alternativeName>
        <fullName evidence="1">NADPH-dependent nitrile oxidoreductase</fullName>
    </alternativeName>
    <alternativeName>
        <fullName evidence="1">PreQ(0) reductase</fullName>
    </alternativeName>
</protein>
<reference key="1">
    <citation type="journal article" date="2002" name="Proc. Natl. Acad. Sci. U.S.A.">
        <title>The genome sequence of the facultative intracellular pathogen Brucella melitensis.</title>
        <authorList>
            <person name="DelVecchio V.G."/>
            <person name="Kapatral V."/>
            <person name="Redkar R.J."/>
            <person name="Patra G."/>
            <person name="Mujer C."/>
            <person name="Los T."/>
            <person name="Ivanova N."/>
            <person name="Anderson I."/>
            <person name="Bhattacharyya A."/>
            <person name="Lykidis A."/>
            <person name="Reznik G."/>
            <person name="Jablonski L."/>
            <person name="Larsen N."/>
            <person name="D'Souza M."/>
            <person name="Bernal A."/>
            <person name="Mazur M."/>
            <person name="Goltsman E."/>
            <person name="Selkov E."/>
            <person name="Elzer P.H."/>
            <person name="Hagius S."/>
            <person name="O'Callaghan D."/>
            <person name="Letesson J.-J."/>
            <person name="Haselkorn R."/>
            <person name="Kyrpides N.C."/>
            <person name="Overbeek R."/>
        </authorList>
    </citation>
    <scope>NUCLEOTIDE SEQUENCE [LARGE SCALE GENOMIC DNA]</scope>
    <source>
        <strain>ATCC 23456 / CCUG 17765 / NCTC 10094 / 16M</strain>
    </source>
</reference>
<keyword id="KW-0963">Cytoplasm</keyword>
<keyword id="KW-0521">NADP</keyword>
<keyword id="KW-0560">Oxidoreductase</keyword>
<keyword id="KW-0671">Queuosine biosynthesis</keyword>
<organism>
    <name type="scientific">Brucella melitensis biotype 1 (strain ATCC 23456 / CCUG 17765 / NCTC 10094 / 16M)</name>
    <dbReference type="NCBI Taxonomy" id="224914"/>
    <lineage>
        <taxon>Bacteria</taxon>
        <taxon>Pseudomonadati</taxon>
        <taxon>Pseudomonadota</taxon>
        <taxon>Alphaproteobacteria</taxon>
        <taxon>Hyphomicrobiales</taxon>
        <taxon>Brucellaceae</taxon>
        <taxon>Brucella/Ochrobactrum group</taxon>
        <taxon>Brucella</taxon>
    </lineage>
</organism>